<evidence type="ECO:0000255" key="1">
    <source>
        <dbReference type="HAMAP-Rule" id="MF_01357"/>
    </source>
</evidence>
<reference key="1">
    <citation type="journal article" date="2001" name="Proc. Natl. Acad. Sci. U.S.A.">
        <title>Complete genome sequence of Caulobacter crescentus.</title>
        <authorList>
            <person name="Nierman W.C."/>
            <person name="Feldblyum T.V."/>
            <person name="Laub M.T."/>
            <person name="Paulsen I.T."/>
            <person name="Nelson K.E."/>
            <person name="Eisen J.A."/>
            <person name="Heidelberg J.F."/>
            <person name="Alley M.R.K."/>
            <person name="Ohta N."/>
            <person name="Maddock J.R."/>
            <person name="Potocka I."/>
            <person name="Nelson W.C."/>
            <person name="Newton A."/>
            <person name="Stephens C."/>
            <person name="Phadke N.D."/>
            <person name="Ely B."/>
            <person name="DeBoy R.T."/>
            <person name="Dodson R.J."/>
            <person name="Durkin A.S."/>
            <person name="Gwinn M.L."/>
            <person name="Haft D.H."/>
            <person name="Kolonay J.F."/>
            <person name="Smit J."/>
            <person name="Craven M.B."/>
            <person name="Khouri H.M."/>
            <person name="Shetty J."/>
            <person name="Berry K.J."/>
            <person name="Utterback T.R."/>
            <person name="Tran K."/>
            <person name="Wolf A.M."/>
            <person name="Vamathevan J.J."/>
            <person name="Ermolaeva M.D."/>
            <person name="White O."/>
            <person name="Salzberg S.L."/>
            <person name="Venter J.C."/>
            <person name="Shapiro L."/>
            <person name="Fraser C.M."/>
        </authorList>
    </citation>
    <scope>NUCLEOTIDE SEQUENCE [LARGE SCALE GENOMIC DNA]</scope>
    <source>
        <strain>ATCC 19089 / CIP 103742 / CB 15</strain>
    </source>
</reference>
<feature type="chain" id="PRO_0000358079" description="NADH-quinone oxidoreductase subunit C">
    <location>
        <begin position="1"/>
        <end position="197"/>
    </location>
</feature>
<gene>
    <name evidence="1" type="primary">nuoC</name>
    <name type="ordered locus">CC_1954</name>
</gene>
<organism>
    <name type="scientific">Caulobacter vibrioides (strain ATCC 19089 / CIP 103742 / CB 15)</name>
    <name type="common">Caulobacter crescentus</name>
    <dbReference type="NCBI Taxonomy" id="190650"/>
    <lineage>
        <taxon>Bacteria</taxon>
        <taxon>Pseudomonadati</taxon>
        <taxon>Pseudomonadota</taxon>
        <taxon>Alphaproteobacteria</taxon>
        <taxon>Caulobacterales</taxon>
        <taxon>Caulobacteraceae</taxon>
        <taxon>Caulobacter</taxon>
    </lineage>
</organism>
<protein>
    <recommendedName>
        <fullName evidence="1">NADH-quinone oxidoreductase subunit C</fullName>
        <ecNumber evidence="1">7.1.1.-</ecNumber>
    </recommendedName>
    <alternativeName>
        <fullName evidence="1">NADH dehydrogenase I subunit C</fullName>
    </alternativeName>
    <alternativeName>
        <fullName evidence="1">NDH-1 subunit C</fullName>
    </alternativeName>
</protein>
<name>NUOC_CAUVC</name>
<accession>Q9A6X2</accession>
<proteinExistence type="inferred from homology"/>
<keyword id="KW-0997">Cell inner membrane</keyword>
<keyword id="KW-1003">Cell membrane</keyword>
<keyword id="KW-0472">Membrane</keyword>
<keyword id="KW-0520">NAD</keyword>
<keyword id="KW-0874">Quinone</keyword>
<keyword id="KW-1185">Reference proteome</keyword>
<keyword id="KW-1278">Translocase</keyword>
<keyword id="KW-0813">Transport</keyword>
<keyword id="KW-0830">Ubiquinone</keyword>
<sequence length="197" mass="22435">MSEALELLGQDIVARAPGVLGHSVAFGELTIVARAASVIDTLTFLRDDAACRFHQLIDLTGVDYPERAARFDVVYHLLSLVKNHRIRLKVSTDEDTPVPSVTPVFPVADWFEREAFDMYGIFFDGHPDLRRILTDYGFHGHPLRKDFPMTGYVEVRYDDELKRVVYEPVKITEFRAFDFLSPWEGAKYALPGDEKAQ</sequence>
<dbReference type="EC" id="7.1.1.-" evidence="1"/>
<dbReference type="EMBL" id="AE005673">
    <property type="protein sequence ID" value="AAK23929.1"/>
    <property type="molecule type" value="Genomic_DNA"/>
</dbReference>
<dbReference type="PIR" id="E87491">
    <property type="entry name" value="E87491"/>
</dbReference>
<dbReference type="RefSeq" id="NP_420761.1">
    <property type="nucleotide sequence ID" value="NC_002696.2"/>
</dbReference>
<dbReference type="RefSeq" id="WP_010919820.1">
    <property type="nucleotide sequence ID" value="NC_002696.2"/>
</dbReference>
<dbReference type="SMR" id="Q9A6X2"/>
<dbReference type="STRING" id="190650.CC_1954"/>
<dbReference type="DNASU" id="942667"/>
<dbReference type="EnsemblBacteria" id="AAK23929">
    <property type="protein sequence ID" value="AAK23929"/>
    <property type="gene ID" value="CC_1954"/>
</dbReference>
<dbReference type="KEGG" id="ccr:CC_1954"/>
<dbReference type="PATRIC" id="fig|190650.5.peg.1970"/>
<dbReference type="eggNOG" id="COG0852">
    <property type="taxonomic scope" value="Bacteria"/>
</dbReference>
<dbReference type="HOGENOM" id="CLU_042628_2_1_5"/>
<dbReference type="BioCyc" id="CAULO:CC1954-MONOMER"/>
<dbReference type="Proteomes" id="UP000001816">
    <property type="component" value="Chromosome"/>
</dbReference>
<dbReference type="GO" id="GO:0005886">
    <property type="term" value="C:plasma membrane"/>
    <property type="evidence" value="ECO:0007669"/>
    <property type="project" value="UniProtKB-SubCell"/>
</dbReference>
<dbReference type="GO" id="GO:0008137">
    <property type="term" value="F:NADH dehydrogenase (ubiquinone) activity"/>
    <property type="evidence" value="ECO:0007669"/>
    <property type="project" value="InterPro"/>
</dbReference>
<dbReference type="GO" id="GO:0050136">
    <property type="term" value="F:NADH:ubiquinone reductase (non-electrogenic) activity"/>
    <property type="evidence" value="ECO:0007669"/>
    <property type="project" value="UniProtKB-UniRule"/>
</dbReference>
<dbReference type="GO" id="GO:0048038">
    <property type="term" value="F:quinone binding"/>
    <property type="evidence" value="ECO:0007669"/>
    <property type="project" value="UniProtKB-KW"/>
</dbReference>
<dbReference type="Gene3D" id="3.30.460.80">
    <property type="entry name" value="NADH:ubiquinone oxidoreductase, 30kDa subunit"/>
    <property type="match status" value="1"/>
</dbReference>
<dbReference type="HAMAP" id="MF_01357">
    <property type="entry name" value="NDH1_NuoC"/>
    <property type="match status" value="1"/>
</dbReference>
<dbReference type="InterPro" id="IPR010218">
    <property type="entry name" value="NADH_DH_suC"/>
</dbReference>
<dbReference type="InterPro" id="IPR037232">
    <property type="entry name" value="NADH_quin_OxRdtase_su_C/D-like"/>
</dbReference>
<dbReference type="InterPro" id="IPR001268">
    <property type="entry name" value="NADH_UbQ_OxRdtase_30kDa_su"/>
</dbReference>
<dbReference type="InterPro" id="IPR020396">
    <property type="entry name" value="NADH_UbQ_OxRdtase_CS"/>
</dbReference>
<dbReference type="NCBIfam" id="TIGR01961">
    <property type="entry name" value="NuoC_fam"/>
    <property type="match status" value="1"/>
</dbReference>
<dbReference type="NCBIfam" id="NF004730">
    <property type="entry name" value="PRK06074.1-1"/>
    <property type="match status" value="1"/>
</dbReference>
<dbReference type="NCBIfam" id="NF004733">
    <property type="entry name" value="PRK06074.1-5"/>
    <property type="match status" value="1"/>
</dbReference>
<dbReference type="PANTHER" id="PTHR10884:SF14">
    <property type="entry name" value="NADH DEHYDROGENASE [UBIQUINONE] IRON-SULFUR PROTEIN 3, MITOCHONDRIAL"/>
    <property type="match status" value="1"/>
</dbReference>
<dbReference type="PANTHER" id="PTHR10884">
    <property type="entry name" value="NADH DEHYDROGENASE UBIQUINONE IRON-SULFUR PROTEIN 3"/>
    <property type="match status" value="1"/>
</dbReference>
<dbReference type="Pfam" id="PF00329">
    <property type="entry name" value="Complex1_30kDa"/>
    <property type="match status" value="1"/>
</dbReference>
<dbReference type="SUPFAM" id="SSF143243">
    <property type="entry name" value="Nqo5-like"/>
    <property type="match status" value="1"/>
</dbReference>
<dbReference type="PROSITE" id="PS00542">
    <property type="entry name" value="COMPLEX1_30K"/>
    <property type="match status" value="1"/>
</dbReference>
<comment type="function">
    <text evidence="1">NDH-1 shuttles electrons from NADH, via FMN and iron-sulfur (Fe-S) centers, to quinones in the respiratory chain. The immediate electron acceptor for the enzyme in this species is believed to be ubiquinone. Couples the redox reaction to proton translocation (for every two electrons transferred, four hydrogen ions are translocated across the cytoplasmic membrane), and thus conserves the redox energy in a proton gradient.</text>
</comment>
<comment type="catalytic activity">
    <reaction evidence="1">
        <text>a quinone + NADH + 5 H(+)(in) = a quinol + NAD(+) + 4 H(+)(out)</text>
        <dbReference type="Rhea" id="RHEA:57888"/>
        <dbReference type="ChEBI" id="CHEBI:15378"/>
        <dbReference type="ChEBI" id="CHEBI:24646"/>
        <dbReference type="ChEBI" id="CHEBI:57540"/>
        <dbReference type="ChEBI" id="CHEBI:57945"/>
        <dbReference type="ChEBI" id="CHEBI:132124"/>
    </reaction>
</comment>
<comment type="subunit">
    <text evidence="1">NDH-1 is composed of 14 different subunits. Subunits NuoB, C, D, E, F, and G constitute the peripheral sector of the complex.</text>
</comment>
<comment type="subcellular location">
    <subcellularLocation>
        <location evidence="1">Cell inner membrane</location>
        <topology evidence="1">Peripheral membrane protein</topology>
        <orientation evidence="1">Cytoplasmic side</orientation>
    </subcellularLocation>
</comment>
<comment type="similarity">
    <text evidence="1">Belongs to the complex I 30 kDa subunit family.</text>
</comment>